<keyword id="KW-0687">Ribonucleoprotein</keyword>
<keyword id="KW-0689">Ribosomal protein</keyword>
<keyword id="KW-0694">RNA-binding</keyword>
<keyword id="KW-0699">rRNA-binding</keyword>
<name>RS4_STRPD</name>
<comment type="function">
    <text evidence="1">One of the primary rRNA binding proteins, it binds directly to 16S rRNA where it nucleates assembly of the body of the 30S subunit.</text>
</comment>
<comment type="function">
    <text evidence="1">With S5 and S12 plays an important role in translational accuracy.</text>
</comment>
<comment type="subunit">
    <text evidence="1">Part of the 30S ribosomal subunit. Contacts protein S5. The interaction surface between S4 and S5 is involved in control of translational fidelity.</text>
</comment>
<comment type="similarity">
    <text evidence="1">Belongs to the universal ribosomal protein uS4 family.</text>
</comment>
<feature type="chain" id="PRO_0000293380" description="Small ribosomal subunit protein uS4">
    <location>
        <begin position="1"/>
        <end position="203"/>
    </location>
</feature>
<feature type="domain" description="S4 RNA-binding" evidence="1">
    <location>
        <begin position="93"/>
        <end position="156"/>
    </location>
</feature>
<evidence type="ECO:0000255" key="1">
    <source>
        <dbReference type="HAMAP-Rule" id="MF_01306"/>
    </source>
</evidence>
<evidence type="ECO:0000305" key="2"/>
<dbReference type="EMBL" id="CP000260">
    <property type="protein sequence ID" value="ABF35017.1"/>
    <property type="molecule type" value="Genomic_DNA"/>
</dbReference>
<dbReference type="RefSeq" id="WP_002982092.1">
    <property type="nucleotide sequence ID" value="NZ_CVUH01000011.1"/>
</dbReference>
<dbReference type="SMR" id="Q1JEE1"/>
<dbReference type="GeneID" id="69901600"/>
<dbReference type="KEGG" id="sph:MGAS10270_Spy1952"/>
<dbReference type="HOGENOM" id="CLU_092403_0_1_9"/>
<dbReference type="Proteomes" id="UP000002436">
    <property type="component" value="Chromosome"/>
</dbReference>
<dbReference type="GO" id="GO:0015935">
    <property type="term" value="C:small ribosomal subunit"/>
    <property type="evidence" value="ECO:0007669"/>
    <property type="project" value="InterPro"/>
</dbReference>
<dbReference type="GO" id="GO:0019843">
    <property type="term" value="F:rRNA binding"/>
    <property type="evidence" value="ECO:0007669"/>
    <property type="project" value="UniProtKB-UniRule"/>
</dbReference>
<dbReference type="GO" id="GO:0003735">
    <property type="term" value="F:structural constituent of ribosome"/>
    <property type="evidence" value="ECO:0007669"/>
    <property type="project" value="InterPro"/>
</dbReference>
<dbReference type="GO" id="GO:0042274">
    <property type="term" value="P:ribosomal small subunit biogenesis"/>
    <property type="evidence" value="ECO:0007669"/>
    <property type="project" value="TreeGrafter"/>
</dbReference>
<dbReference type="GO" id="GO:0006412">
    <property type="term" value="P:translation"/>
    <property type="evidence" value="ECO:0007669"/>
    <property type="project" value="UniProtKB-UniRule"/>
</dbReference>
<dbReference type="CDD" id="cd00165">
    <property type="entry name" value="S4"/>
    <property type="match status" value="1"/>
</dbReference>
<dbReference type="FunFam" id="1.10.1050.10:FF:000001">
    <property type="entry name" value="30S ribosomal protein S4"/>
    <property type="match status" value="1"/>
</dbReference>
<dbReference type="FunFam" id="3.10.290.10:FF:000001">
    <property type="entry name" value="30S ribosomal protein S4"/>
    <property type="match status" value="1"/>
</dbReference>
<dbReference type="Gene3D" id="1.10.1050.10">
    <property type="entry name" value="Ribosomal Protein S4 Delta 41, Chain A, domain 1"/>
    <property type="match status" value="1"/>
</dbReference>
<dbReference type="Gene3D" id="3.10.290.10">
    <property type="entry name" value="RNA-binding S4 domain"/>
    <property type="match status" value="1"/>
</dbReference>
<dbReference type="HAMAP" id="MF_01306_B">
    <property type="entry name" value="Ribosomal_uS4_B"/>
    <property type="match status" value="1"/>
</dbReference>
<dbReference type="InterPro" id="IPR022801">
    <property type="entry name" value="Ribosomal_uS4"/>
</dbReference>
<dbReference type="InterPro" id="IPR005709">
    <property type="entry name" value="Ribosomal_uS4_bac-type"/>
</dbReference>
<dbReference type="InterPro" id="IPR018079">
    <property type="entry name" value="Ribosomal_uS4_CS"/>
</dbReference>
<dbReference type="InterPro" id="IPR001912">
    <property type="entry name" value="Ribosomal_uS4_N"/>
</dbReference>
<dbReference type="InterPro" id="IPR002942">
    <property type="entry name" value="S4_RNA-bd"/>
</dbReference>
<dbReference type="InterPro" id="IPR036986">
    <property type="entry name" value="S4_RNA-bd_sf"/>
</dbReference>
<dbReference type="NCBIfam" id="NF003717">
    <property type="entry name" value="PRK05327.1"/>
    <property type="match status" value="1"/>
</dbReference>
<dbReference type="NCBIfam" id="TIGR01017">
    <property type="entry name" value="rpsD_bact"/>
    <property type="match status" value="1"/>
</dbReference>
<dbReference type="PANTHER" id="PTHR11831">
    <property type="entry name" value="30S 40S RIBOSOMAL PROTEIN"/>
    <property type="match status" value="1"/>
</dbReference>
<dbReference type="PANTHER" id="PTHR11831:SF4">
    <property type="entry name" value="SMALL RIBOSOMAL SUBUNIT PROTEIN US4M"/>
    <property type="match status" value="1"/>
</dbReference>
<dbReference type="Pfam" id="PF00163">
    <property type="entry name" value="Ribosomal_S4"/>
    <property type="match status" value="1"/>
</dbReference>
<dbReference type="Pfam" id="PF01479">
    <property type="entry name" value="S4"/>
    <property type="match status" value="1"/>
</dbReference>
<dbReference type="SMART" id="SM01390">
    <property type="entry name" value="Ribosomal_S4"/>
    <property type="match status" value="1"/>
</dbReference>
<dbReference type="SMART" id="SM00363">
    <property type="entry name" value="S4"/>
    <property type="match status" value="1"/>
</dbReference>
<dbReference type="SUPFAM" id="SSF55174">
    <property type="entry name" value="Alpha-L RNA-binding motif"/>
    <property type="match status" value="1"/>
</dbReference>
<dbReference type="PROSITE" id="PS00632">
    <property type="entry name" value="RIBOSOMAL_S4"/>
    <property type="match status" value="1"/>
</dbReference>
<dbReference type="PROSITE" id="PS50889">
    <property type="entry name" value="S4"/>
    <property type="match status" value="1"/>
</dbReference>
<organism>
    <name type="scientific">Streptococcus pyogenes serotype M2 (strain MGAS10270)</name>
    <dbReference type="NCBI Taxonomy" id="370552"/>
    <lineage>
        <taxon>Bacteria</taxon>
        <taxon>Bacillati</taxon>
        <taxon>Bacillota</taxon>
        <taxon>Bacilli</taxon>
        <taxon>Lactobacillales</taxon>
        <taxon>Streptococcaceae</taxon>
        <taxon>Streptococcus</taxon>
    </lineage>
</organism>
<gene>
    <name evidence="1" type="primary">rpsD</name>
    <name type="ordered locus">MGAS10270_Spy1952</name>
</gene>
<accession>Q1JEE1</accession>
<reference key="1">
    <citation type="journal article" date="2006" name="Proc. Natl. Acad. Sci. U.S.A.">
        <title>Molecular genetic anatomy of inter- and intraserotype variation in the human bacterial pathogen group A Streptococcus.</title>
        <authorList>
            <person name="Beres S.B."/>
            <person name="Richter E.W."/>
            <person name="Nagiec M.J."/>
            <person name="Sumby P."/>
            <person name="Porcella S.F."/>
            <person name="DeLeo F.R."/>
            <person name="Musser J.M."/>
        </authorList>
    </citation>
    <scope>NUCLEOTIDE SEQUENCE [LARGE SCALE GENOMIC DNA]</scope>
    <source>
        <strain>MGAS10270</strain>
    </source>
</reference>
<sequence length="203" mass="23123">MSRYTGPSWKQSRRLGLSLTGTGKELARRNYVPGQHGPNNRSKLSEYGLQLAEKQKLRFSYGLGEKQFRNLFVQATKIKEGTLGFNFMVLLERRLDNVVYRLGLATTRRQARQFVNHGHILVDGKRVDIPSYRVDPGQVISVREKSMKVPAILEAVEATLGRPAFVSFDAEKLEGSLTRLPERDEINPEINEALVVEFYNKML</sequence>
<proteinExistence type="inferred from homology"/>
<protein>
    <recommendedName>
        <fullName evidence="1">Small ribosomal subunit protein uS4</fullName>
    </recommendedName>
    <alternativeName>
        <fullName evidence="2">30S ribosomal protein S4</fullName>
    </alternativeName>
</protein>